<accession>B1I9L8</accession>
<reference key="1">
    <citation type="journal article" date="2010" name="Genome Biol.">
        <title>Structure and dynamics of the pan-genome of Streptococcus pneumoniae and closely related species.</title>
        <authorList>
            <person name="Donati C."/>
            <person name="Hiller N.L."/>
            <person name="Tettelin H."/>
            <person name="Muzzi A."/>
            <person name="Croucher N.J."/>
            <person name="Angiuoli S.V."/>
            <person name="Oggioni M."/>
            <person name="Dunning Hotopp J.C."/>
            <person name="Hu F.Z."/>
            <person name="Riley D.R."/>
            <person name="Covacci A."/>
            <person name="Mitchell T.J."/>
            <person name="Bentley S.D."/>
            <person name="Kilian M."/>
            <person name="Ehrlich G.D."/>
            <person name="Rappuoli R."/>
            <person name="Moxon E.R."/>
            <person name="Masignani V."/>
        </authorList>
    </citation>
    <scope>NUCLEOTIDE SEQUENCE [LARGE SCALE GENOMIC DNA]</scope>
    <source>
        <strain>Hungary19A-6</strain>
    </source>
</reference>
<feature type="chain" id="PRO_1000123670" description="3-hydroxyacyl-[acyl-carrier-protein] dehydratase FabZ">
    <location>
        <begin position="1"/>
        <end position="140"/>
    </location>
</feature>
<feature type="active site" evidence="1">
    <location>
        <position position="47"/>
    </location>
</feature>
<name>FABZ_STRPI</name>
<keyword id="KW-0963">Cytoplasm</keyword>
<keyword id="KW-0441">Lipid A biosynthesis</keyword>
<keyword id="KW-0444">Lipid biosynthesis</keyword>
<keyword id="KW-0443">Lipid metabolism</keyword>
<keyword id="KW-0456">Lyase</keyword>
<evidence type="ECO:0000255" key="1">
    <source>
        <dbReference type="HAMAP-Rule" id="MF_00406"/>
    </source>
</evidence>
<dbReference type="EC" id="4.2.1.59" evidence="1"/>
<dbReference type="EMBL" id="CP000936">
    <property type="protein sequence ID" value="ACA37525.1"/>
    <property type="molecule type" value="Genomic_DNA"/>
</dbReference>
<dbReference type="RefSeq" id="WP_000565515.1">
    <property type="nucleotide sequence ID" value="NC_010380.1"/>
</dbReference>
<dbReference type="SMR" id="B1I9L8"/>
<dbReference type="GeneID" id="49599193"/>
<dbReference type="KEGG" id="spv:SPH_0533"/>
<dbReference type="HOGENOM" id="CLU_078912_1_2_9"/>
<dbReference type="Proteomes" id="UP000002163">
    <property type="component" value="Chromosome"/>
</dbReference>
<dbReference type="GO" id="GO:0005737">
    <property type="term" value="C:cytoplasm"/>
    <property type="evidence" value="ECO:0007669"/>
    <property type="project" value="UniProtKB-SubCell"/>
</dbReference>
<dbReference type="GO" id="GO:0016020">
    <property type="term" value="C:membrane"/>
    <property type="evidence" value="ECO:0007669"/>
    <property type="project" value="GOC"/>
</dbReference>
<dbReference type="GO" id="GO:0019171">
    <property type="term" value="F:(3R)-hydroxyacyl-[acyl-carrier-protein] dehydratase activity"/>
    <property type="evidence" value="ECO:0007669"/>
    <property type="project" value="UniProtKB-EC"/>
</dbReference>
<dbReference type="GO" id="GO:0006633">
    <property type="term" value="P:fatty acid biosynthetic process"/>
    <property type="evidence" value="ECO:0007669"/>
    <property type="project" value="UniProtKB-UniRule"/>
</dbReference>
<dbReference type="GO" id="GO:0009245">
    <property type="term" value="P:lipid A biosynthetic process"/>
    <property type="evidence" value="ECO:0007669"/>
    <property type="project" value="UniProtKB-UniRule"/>
</dbReference>
<dbReference type="CDD" id="cd01288">
    <property type="entry name" value="FabZ"/>
    <property type="match status" value="1"/>
</dbReference>
<dbReference type="FunFam" id="3.10.129.10:FF:000001">
    <property type="entry name" value="3-hydroxyacyl-[acyl-carrier-protein] dehydratase FabZ"/>
    <property type="match status" value="1"/>
</dbReference>
<dbReference type="Gene3D" id="3.10.129.10">
    <property type="entry name" value="Hotdog Thioesterase"/>
    <property type="match status" value="1"/>
</dbReference>
<dbReference type="HAMAP" id="MF_00406">
    <property type="entry name" value="FabZ"/>
    <property type="match status" value="1"/>
</dbReference>
<dbReference type="InterPro" id="IPR013114">
    <property type="entry name" value="FabA_FabZ"/>
</dbReference>
<dbReference type="InterPro" id="IPR010084">
    <property type="entry name" value="FabZ"/>
</dbReference>
<dbReference type="InterPro" id="IPR029069">
    <property type="entry name" value="HotDog_dom_sf"/>
</dbReference>
<dbReference type="NCBIfam" id="TIGR01750">
    <property type="entry name" value="fabZ"/>
    <property type="match status" value="1"/>
</dbReference>
<dbReference type="NCBIfam" id="NF000582">
    <property type="entry name" value="PRK00006.1"/>
    <property type="match status" value="1"/>
</dbReference>
<dbReference type="PANTHER" id="PTHR30272">
    <property type="entry name" value="3-HYDROXYACYL-[ACYL-CARRIER-PROTEIN] DEHYDRATASE"/>
    <property type="match status" value="1"/>
</dbReference>
<dbReference type="PANTHER" id="PTHR30272:SF1">
    <property type="entry name" value="3-HYDROXYACYL-[ACYL-CARRIER-PROTEIN] DEHYDRATASE"/>
    <property type="match status" value="1"/>
</dbReference>
<dbReference type="Pfam" id="PF07977">
    <property type="entry name" value="FabA"/>
    <property type="match status" value="1"/>
</dbReference>
<dbReference type="SUPFAM" id="SSF54637">
    <property type="entry name" value="Thioesterase/thiol ester dehydrase-isomerase"/>
    <property type="match status" value="1"/>
</dbReference>
<gene>
    <name evidence="1" type="primary">fabZ</name>
    <name type="ordered locus">SPH_0533</name>
</gene>
<protein>
    <recommendedName>
        <fullName evidence="1">3-hydroxyacyl-[acyl-carrier-protein] dehydratase FabZ</fullName>
        <ecNumber evidence="1">4.2.1.59</ecNumber>
    </recommendedName>
    <alternativeName>
        <fullName evidence="1">(3R)-hydroxymyristoyl-[acyl-carrier-protein] dehydratase</fullName>
        <shortName evidence="1">(3R)-hydroxymyristoyl-ACP dehydrase</shortName>
    </alternativeName>
    <alternativeName>
        <fullName evidence="1">Beta-hydroxyacyl-ACP dehydratase</fullName>
    </alternativeName>
</protein>
<proteinExistence type="inferred from homology"/>
<comment type="function">
    <text evidence="1">Involved in unsaturated fatty acids biosynthesis. Catalyzes the dehydration of short chain beta-hydroxyacyl-ACPs and long chain saturated and unsaturated beta-hydroxyacyl-ACPs.</text>
</comment>
<comment type="catalytic activity">
    <reaction evidence="1">
        <text>a (3R)-hydroxyacyl-[ACP] = a (2E)-enoyl-[ACP] + H2O</text>
        <dbReference type="Rhea" id="RHEA:13097"/>
        <dbReference type="Rhea" id="RHEA-COMP:9925"/>
        <dbReference type="Rhea" id="RHEA-COMP:9945"/>
        <dbReference type="ChEBI" id="CHEBI:15377"/>
        <dbReference type="ChEBI" id="CHEBI:78784"/>
        <dbReference type="ChEBI" id="CHEBI:78827"/>
        <dbReference type="EC" id="4.2.1.59"/>
    </reaction>
</comment>
<comment type="subcellular location">
    <subcellularLocation>
        <location evidence="1">Cytoplasm</location>
    </subcellularLocation>
</comment>
<comment type="similarity">
    <text evidence="1">Belongs to the thioester dehydratase family. FabZ subfamily.</text>
</comment>
<sequence>MIDIQGIKEALPHRYPMLLVDRVLEVSEDTIVAIKNVTINEPFFNGHFPQYPVMPGVLIMEALAQTAGVLELSKPENKGKLVFYAGMDKVKFKKQVVPGDQLVMTATFVKRRGTIAVVEAKAEVDGKLAASGTLTFAIGN</sequence>
<organism>
    <name type="scientific">Streptococcus pneumoniae (strain Hungary19A-6)</name>
    <dbReference type="NCBI Taxonomy" id="487214"/>
    <lineage>
        <taxon>Bacteria</taxon>
        <taxon>Bacillati</taxon>
        <taxon>Bacillota</taxon>
        <taxon>Bacilli</taxon>
        <taxon>Lactobacillales</taxon>
        <taxon>Streptococcaceae</taxon>
        <taxon>Streptococcus</taxon>
    </lineage>
</organism>